<name>PNTH_STRAE</name>
<reference key="1">
    <citation type="journal article" date="2011" name="J. Am. Chem. Soc.">
        <title>Genome mining in streptomyces. Discovery of an unprecedented P450-catalyzed oxidative rearrangement that is the final step in the biosynthesis of pentalenolactone.</title>
        <authorList>
            <person name="Zhu D."/>
            <person name="Seo M.J."/>
            <person name="Ikeda H."/>
            <person name="Cane D.E."/>
        </authorList>
    </citation>
    <scope>NUCLEOTIDE SEQUENCE [GENOMIC DNA]</scope>
    <source>
        <strain>Tu469</strain>
    </source>
</reference>
<proteinExistence type="inferred from homology"/>
<accession>E3VWI4</accession>
<protein>
    <recommendedName>
        <fullName>1-deoxypentalenic acid 11-beta-hydroxylase</fullName>
        <ecNumber>1.14.11.35</ecNumber>
    </recommendedName>
    <alternativeName>
        <fullName>Pentalenolactone biosynthesis protein H</fullName>
    </alternativeName>
</protein>
<comment type="function">
    <text evidence="1">Catalyzes the conversion of 1-deoxypentalenic acid to 11-beta-hydroxy-1-deoxypentalenic acid in the biosynthesis of pentalenolactone antibiotic.</text>
</comment>
<comment type="catalytic activity">
    <reaction>
        <text>1-deoxypentalenate + 2-oxoglutarate + O2 = 1-deoxy-11beta-hydroxypentalenate + succinate + CO2</text>
        <dbReference type="Rhea" id="RHEA:34619"/>
        <dbReference type="ChEBI" id="CHEBI:15379"/>
        <dbReference type="ChEBI" id="CHEBI:16526"/>
        <dbReference type="ChEBI" id="CHEBI:16810"/>
        <dbReference type="ChEBI" id="CHEBI:30031"/>
        <dbReference type="ChEBI" id="CHEBI:68650"/>
        <dbReference type="ChEBI" id="CHEBI:70779"/>
        <dbReference type="EC" id="1.14.11.35"/>
    </reaction>
</comment>
<comment type="cofactor">
    <cofactor evidence="1">
        <name>Fe cation</name>
        <dbReference type="ChEBI" id="CHEBI:24875"/>
    </cofactor>
</comment>
<comment type="cofactor">
    <cofactor evidence="1">
        <name>L-ascorbate</name>
        <dbReference type="ChEBI" id="CHEBI:38290"/>
    </cofactor>
</comment>
<comment type="pathway">
    <text>Antibiotic biosynthesis; pentalenolactone biosynthesis.</text>
</comment>
<comment type="similarity">
    <text evidence="3">Belongs to the PhyH family.</text>
</comment>
<gene>
    <name type="primary">pntH</name>
</gene>
<feature type="chain" id="PRO_0000422001" description="1-deoxypentalenic acid 11-beta-hydroxylase">
    <location>
        <begin position="1"/>
        <end position="283"/>
    </location>
</feature>
<feature type="region of interest" description="Disordered" evidence="2">
    <location>
        <begin position="251"/>
        <end position="283"/>
    </location>
</feature>
<feature type="binding site" evidence="1">
    <location>
        <position position="117"/>
    </location>
    <ligand>
        <name>substrate</name>
    </ligand>
</feature>
<feature type="binding site" evidence="1">
    <location>
        <begin position="135"/>
        <end position="137"/>
    </location>
    <ligand>
        <name>2-oxoglutarate</name>
        <dbReference type="ChEBI" id="CHEBI:16810"/>
    </ligand>
</feature>
<feature type="binding site" evidence="1">
    <location>
        <position position="135"/>
    </location>
    <ligand>
        <name>Fe cation</name>
        <dbReference type="ChEBI" id="CHEBI:24875"/>
    </ligand>
</feature>
<feature type="binding site" evidence="1">
    <location>
        <position position="137"/>
    </location>
    <ligand>
        <name>Fe cation</name>
        <dbReference type="ChEBI" id="CHEBI:24875"/>
    </ligand>
</feature>
<feature type="binding site" evidence="1">
    <location>
        <position position="151"/>
    </location>
    <ligand>
        <name>2-oxoglutarate</name>
        <dbReference type="ChEBI" id="CHEBI:16810"/>
    </ligand>
</feature>
<feature type="binding site" evidence="1">
    <location>
        <position position="186"/>
    </location>
    <ligand>
        <name>substrate</name>
    </ligand>
</feature>
<feature type="binding site" evidence="1">
    <location>
        <position position="224"/>
    </location>
    <ligand>
        <name>Fe cation</name>
        <dbReference type="ChEBI" id="CHEBI:24875"/>
    </ligand>
</feature>
<feature type="binding site" evidence="1">
    <location>
        <position position="226"/>
    </location>
    <ligand>
        <name>2-oxoglutarate</name>
        <dbReference type="ChEBI" id="CHEBI:16810"/>
    </ligand>
</feature>
<feature type="binding site" evidence="1">
    <location>
        <position position="238"/>
    </location>
    <ligand>
        <name>2-oxoglutarate</name>
        <dbReference type="ChEBI" id="CHEBI:16810"/>
    </ligand>
</feature>
<organism>
    <name type="scientific">Streptomyces arenae</name>
    <dbReference type="NCBI Taxonomy" id="29301"/>
    <lineage>
        <taxon>Bacteria</taxon>
        <taxon>Bacillati</taxon>
        <taxon>Actinomycetota</taxon>
        <taxon>Actinomycetes</taxon>
        <taxon>Kitasatosporales</taxon>
        <taxon>Streptomycetaceae</taxon>
        <taxon>Streptomyces</taxon>
    </lineage>
</organism>
<sequence>MTDTFSDYADCTPLLDDREALDRFYDEHGYVYLRGVLDRELVRTTAEQMLQGLIALGHAAPGTTLDTLTIESYEAVDEVAMHDHVRYDDLWNHPSTLKVWEKVFGEPVFVFKSTTIRYYPSAPDSAEPSFLTPLHQDGFYIGPNKDFRTAWIPLLPTTRGTGGVAIADGSHKKGPREHVLTENFRRFGHAVRGIPPAEFGADEELLFSPMEPGDVLLFHAFMCHKSLPNVSVDPAGMRMSMDTRIQPASSHRGFNALTPWPESAKDASKGIMSKITGTPTTAE</sequence>
<evidence type="ECO:0000250" key="1"/>
<evidence type="ECO:0000256" key="2">
    <source>
        <dbReference type="SAM" id="MobiDB-lite"/>
    </source>
</evidence>
<evidence type="ECO:0000305" key="3"/>
<keyword id="KW-0045">Antibiotic biosynthesis</keyword>
<keyword id="KW-0223">Dioxygenase</keyword>
<keyword id="KW-0408">Iron</keyword>
<keyword id="KW-0479">Metal-binding</keyword>
<keyword id="KW-0560">Oxidoreductase</keyword>
<keyword id="KW-0847">Vitamin C</keyword>
<dbReference type="EC" id="1.14.11.35"/>
<dbReference type="EMBL" id="HQ292065">
    <property type="protein sequence ID" value="ADO85572.1"/>
    <property type="molecule type" value="Genomic_DNA"/>
</dbReference>
<dbReference type="SMR" id="E3VWI4"/>
<dbReference type="BioCyc" id="MetaCyc:MONOMER-16849"/>
<dbReference type="UniPathway" id="UPA00974"/>
<dbReference type="GO" id="GO:0016706">
    <property type="term" value="F:2-oxoglutarate-dependent dioxygenase activity"/>
    <property type="evidence" value="ECO:0007669"/>
    <property type="project" value="UniProtKB-ARBA"/>
</dbReference>
<dbReference type="GO" id="GO:0005506">
    <property type="term" value="F:iron ion binding"/>
    <property type="evidence" value="ECO:0007669"/>
    <property type="project" value="UniProtKB-ARBA"/>
</dbReference>
<dbReference type="GO" id="GO:0031418">
    <property type="term" value="F:L-ascorbic acid binding"/>
    <property type="evidence" value="ECO:0007669"/>
    <property type="project" value="UniProtKB-KW"/>
</dbReference>
<dbReference type="GO" id="GO:0017000">
    <property type="term" value="P:antibiotic biosynthetic process"/>
    <property type="evidence" value="ECO:0007669"/>
    <property type="project" value="UniProtKB-KW"/>
</dbReference>
<dbReference type="Gene3D" id="2.60.120.620">
    <property type="entry name" value="q2cbj1_9rhob like domain"/>
    <property type="match status" value="1"/>
</dbReference>
<dbReference type="InterPro" id="IPR054971">
    <property type="entry name" value="DxPntBtaHylase"/>
</dbReference>
<dbReference type="InterPro" id="IPR008775">
    <property type="entry name" value="Phytyl_CoA_dOase-like"/>
</dbReference>
<dbReference type="NCBIfam" id="NF045813">
    <property type="entry name" value="DxPntBtaHylase"/>
    <property type="match status" value="1"/>
</dbReference>
<dbReference type="PANTHER" id="PTHR20883:SF48">
    <property type="entry name" value="ECTOINE DIOXYGENASE"/>
    <property type="match status" value="1"/>
</dbReference>
<dbReference type="PANTHER" id="PTHR20883">
    <property type="entry name" value="PHYTANOYL-COA DIOXYGENASE DOMAIN CONTAINING 1"/>
    <property type="match status" value="1"/>
</dbReference>
<dbReference type="Pfam" id="PF05721">
    <property type="entry name" value="PhyH"/>
    <property type="match status" value="1"/>
</dbReference>
<dbReference type="SUPFAM" id="SSF51197">
    <property type="entry name" value="Clavaminate synthase-like"/>
    <property type="match status" value="1"/>
</dbReference>